<reference key="1">
    <citation type="journal article" date="1994" name="Plant Physiol.">
        <title>The cloning of two tomato lipoxygenase genes and their differential expression during fruit ripening.</title>
        <authorList>
            <person name="Ferrie B.J."/>
            <person name="Beaudoin N."/>
            <person name="Burkhart W."/>
            <person name="Bowsher C.G."/>
            <person name="Rothstein S.J."/>
        </authorList>
    </citation>
    <scope>NUCLEOTIDE SEQUENCE [MRNA]</scope>
    <source>
        <strain>cv. Caruso</strain>
        <tissue>Pericarp</tissue>
    </source>
</reference>
<organism>
    <name type="scientific">Solanum lycopersicum</name>
    <name type="common">Tomato</name>
    <name type="synonym">Lycopersicon esculentum</name>
    <dbReference type="NCBI Taxonomy" id="4081"/>
    <lineage>
        <taxon>Eukaryota</taxon>
        <taxon>Viridiplantae</taxon>
        <taxon>Streptophyta</taxon>
        <taxon>Embryophyta</taxon>
        <taxon>Tracheophyta</taxon>
        <taxon>Spermatophyta</taxon>
        <taxon>Magnoliopsida</taxon>
        <taxon>eudicotyledons</taxon>
        <taxon>Gunneridae</taxon>
        <taxon>Pentapetalae</taxon>
        <taxon>asterids</taxon>
        <taxon>lamiids</taxon>
        <taxon>Solanales</taxon>
        <taxon>Solanaceae</taxon>
        <taxon>Solanoideae</taxon>
        <taxon>Solaneae</taxon>
        <taxon>Solanum</taxon>
        <taxon>Solanum subgen. Lycopersicon</taxon>
    </lineage>
</organism>
<proteinExistence type="evidence at transcript level"/>
<evidence type="ECO:0000250" key="1"/>
<evidence type="ECO:0000255" key="2">
    <source>
        <dbReference type="PROSITE-ProRule" id="PRU00152"/>
    </source>
</evidence>
<evidence type="ECO:0000255" key="3">
    <source>
        <dbReference type="PROSITE-ProRule" id="PRU00726"/>
    </source>
</evidence>
<evidence type="ECO:0000256" key="4">
    <source>
        <dbReference type="SAM" id="MobiDB-lite"/>
    </source>
</evidence>
<evidence type="ECO:0000305" key="5"/>
<protein>
    <recommendedName>
        <fullName>Linoleate 9S-lipoxygenase A</fullName>
        <ecNumber>1.13.11.58</ecNumber>
    </recommendedName>
    <alternativeName>
        <fullName>Lipoxygenase A</fullName>
    </alternativeName>
</protein>
<name>LOXA_SOLLC</name>
<comment type="function">
    <text>Plant lipoxygenase may be involved in a number of diverse aspects of plant physiology including growth and development, pest resistance, and senescence or responses to wounding. It catalyzes the hydroperoxidation of lipids containing a cis,cis-1,4-pentadiene structure.</text>
</comment>
<comment type="catalytic activity">
    <reaction>
        <text>(9Z,12Z)-octadecadienoate + O2 = (9S)-hydroperoxy-(10E,12Z)-octadecadienoate</text>
        <dbReference type="Rhea" id="RHEA:30291"/>
        <dbReference type="ChEBI" id="CHEBI:15379"/>
        <dbReference type="ChEBI" id="CHEBI:30245"/>
        <dbReference type="ChEBI" id="CHEBI:60955"/>
        <dbReference type="EC" id="1.13.11.58"/>
    </reaction>
</comment>
<comment type="cofactor">
    <cofactor evidence="3">
        <name>Fe cation</name>
        <dbReference type="ChEBI" id="CHEBI:24875"/>
    </cofactor>
    <text evidence="3">Binds 1 Fe cation per subunit. Iron is tightly bound.</text>
</comment>
<comment type="pathway">
    <text evidence="3">Lipid metabolism; oxylipin biosynthesis.</text>
</comment>
<comment type="subunit">
    <text evidence="1">Monomer.</text>
</comment>
<comment type="subcellular location">
    <subcellularLocation>
        <location>Cytoplasm</location>
    </subcellularLocation>
</comment>
<comment type="tissue specificity">
    <text>Expressed in germinating seeds as well as in ripening fruit.</text>
</comment>
<comment type="similarity">
    <text evidence="5">Belongs to the lipoxygenase family.</text>
</comment>
<gene>
    <name type="primary">LOX1.1</name>
    <name type="synonym">LOXA</name>
</gene>
<feature type="chain" id="PRO_0000220705" description="Linoleate 9S-lipoxygenase A">
    <location>
        <begin position="1"/>
        <end position="860"/>
    </location>
</feature>
<feature type="domain" description="PLAT" evidence="2">
    <location>
        <begin position="29"/>
        <end position="159"/>
    </location>
</feature>
<feature type="domain" description="Lipoxygenase" evidence="3">
    <location>
        <begin position="162"/>
        <end position="860"/>
    </location>
</feature>
<feature type="region of interest" description="Disordered" evidence="4">
    <location>
        <begin position="209"/>
        <end position="246"/>
    </location>
</feature>
<feature type="binding site" evidence="3">
    <location>
        <position position="521"/>
    </location>
    <ligand>
        <name>Fe cation</name>
        <dbReference type="ChEBI" id="CHEBI:24875"/>
        <note>catalytic</note>
    </ligand>
</feature>
<feature type="binding site" evidence="3">
    <location>
        <position position="526"/>
    </location>
    <ligand>
        <name>Fe cation</name>
        <dbReference type="ChEBI" id="CHEBI:24875"/>
        <note>catalytic</note>
    </ligand>
</feature>
<feature type="binding site" evidence="3">
    <location>
        <position position="712"/>
    </location>
    <ligand>
        <name>Fe cation</name>
        <dbReference type="ChEBI" id="CHEBI:24875"/>
        <note>catalytic</note>
    </ligand>
</feature>
<feature type="binding site" evidence="3">
    <location>
        <position position="716"/>
    </location>
    <ligand>
        <name>Fe cation</name>
        <dbReference type="ChEBI" id="CHEBI:24875"/>
        <note>catalytic</note>
    </ligand>
</feature>
<feature type="binding site" evidence="3">
    <location>
        <position position="860"/>
    </location>
    <ligand>
        <name>Fe cation</name>
        <dbReference type="ChEBI" id="CHEBI:24875"/>
        <note>catalytic</note>
    </ligand>
</feature>
<keyword id="KW-0963">Cytoplasm</keyword>
<keyword id="KW-0223">Dioxygenase</keyword>
<keyword id="KW-0275">Fatty acid biosynthesis</keyword>
<keyword id="KW-0276">Fatty acid metabolism</keyword>
<keyword id="KW-0408">Iron</keyword>
<keyword id="KW-0444">Lipid biosynthesis</keyword>
<keyword id="KW-0443">Lipid metabolism</keyword>
<keyword id="KW-0479">Metal-binding</keyword>
<keyword id="KW-0560">Oxidoreductase</keyword>
<keyword id="KW-0925">Oxylipin biosynthesis</keyword>
<keyword id="KW-1185">Reference proteome</keyword>
<accession>P38415</accession>
<dbReference type="EC" id="1.13.11.58"/>
<dbReference type="EMBL" id="U09026">
    <property type="protein sequence ID" value="AAA53184.1"/>
    <property type="molecule type" value="mRNA"/>
</dbReference>
<dbReference type="RefSeq" id="NP_001234856.1">
    <property type="nucleotide sequence ID" value="NM_001247927.2"/>
</dbReference>
<dbReference type="SMR" id="P38415"/>
<dbReference type="FunCoup" id="P38415">
    <property type="interactions" value="97"/>
</dbReference>
<dbReference type="STRING" id="4081.P38415"/>
<dbReference type="PaxDb" id="4081-Solyc08g014000.2.1"/>
<dbReference type="EnsemblPlants" id="Solyc08g014000.3.1">
    <property type="protein sequence ID" value="Solyc08g014000.3.1"/>
    <property type="gene ID" value="Solyc08g014000.3"/>
</dbReference>
<dbReference type="GeneID" id="543994"/>
<dbReference type="Gramene" id="Solyc08g014000.3.1">
    <property type="protein sequence ID" value="Solyc08g014000.3.1"/>
    <property type="gene ID" value="Solyc08g014000.3"/>
</dbReference>
<dbReference type="KEGG" id="sly:543994"/>
<dbReference type="eggNOG" id="ENOG502QVKD">
    <property type="taxonomic scope" value="Eukaryota"/>
</dbReference>
<dbReference type="HOGENOM" id="CLU_004282_0_0_1"/>
<dbReference type="InParanoid" id="P38415"/>
<dbReference type="OMA" id="ENWLTTI"/>
<dbReference type="OrthoDB" id="407298at2759"/>
<dbReference type="PhylomeDB" id="P38415"/>
<dbReference type="BRENDA" id="1.13.11.58">
    <property type="organism ID" value="3101"/>
</dbReference>
<dbReference type="UniPathway" id="UPA00382"/>
<dbReference type="Proteomes" id="UP000004994">
    <property type="component" value="Chromosome 8"/>
</dbReference>
<dbReference type="GO" id="GO:0005737">
    <property type="term" value="C:cytoplasm"/>
    <property type="evidence" value="ECO:0007669"/>
    <property type="project" value="UniProtKB-SubCell"/>
</dbReference>
<dbReference type="GO" id="GO:1990136">
    <property type="term" value="F:linoleate 9S-lipoxygenase activity"/>
    <property type="evidence" value="ECO:0007669"/>
    <property type="project" value="UniProtKB-EC"/>
</dbReference>
<dbReference type="GO" id="GO:0046872">
    <property type="term" value="F:metal ion binding"/>
    <property type="evidence" value="ECO:0007669"/>
    <property type="project" value="UniProtKB-KW"/>
</dbReference>
<dbReference type="GO" id="GO:0016702">
    <property type="term" value="F:oxidoreductase activity, acting on single donors with incorporation of molecular oxygen, incorporation of two atoms of oxygen"/>
    <property type="evidence" value="ECO:0000318"/>
    <property type="project" value="GO_Central"/>
</dbReference>
<dbReference type="GO" id="GO:0006633">
    <property type="term" value="P:fatty acid biosynthetic process"/>
    <property type="evidence" value="ECO:0007669"/>
    <property type="project" value="UniProtKB-KW"/>
</dbReference>
<dbReference type="GO" id="GO:0034440">
    <property type="term" value="P:lipid oxidation"/>
    <property type="evidence" value="ECO:0000318"/>
    <property type="project" value="GO_Central"/>
</dbReference>
<dbReference type="GO" id="GO:0031408">
    <property type="term" value="P:oxylipin biosynthetic process"/>
    <property type="evidence" value="ECO:0007669"/>
    <property type="project" value="UniProtKB-UniPathway"/>
</dbReference>
<dbReference type="CDD" id="cd01751">
    <property type="entry name" value="PLAT_LH2"/>
    <property type="match status" value="1"/>
</dbReference>
<dbReference type="FunFam" id="1.20.245.10:FF:000002">
    <property type="entry name" value="Lipoxygenase"/>
    <property type="match status" value="1"/>
</dbReference>
<dbReference type="FunFam" id="2.60.60.20:FF:000015">
    <property type="entry name" value="Lipoxygenase"/>
    <property type="match status" value="1"/>
</dbReference>
<dbReference type="FunFam" id="3.10.450.60:FF:000002">
    <property type="entry name" value="Lipoxygenase"/>
    <property type="match status" value="1"/>
</dbReference>
<dbReference type="FunFam" id="4.10.372.10:FF:000001">
    <property type="entry name" value="Lipoxygenase"/>
    <property type="match status" value="1"/>
</dbReference>
<dbReference type="FunFam" id="4.10.375.10:FF:000001">
    <property type="entry name" value="Lipoxygenase"/>
    <property type="match status" value="1"/>
</dbReference>
<dbReference type="Gene3D" id="3.10.450.60">
    <property type="match status" value="1"/>
</dbReference>
<dbReference type="Gene3D" id="4.10.375.10">
    <property type="entry name" value="Lipoxygenase-1, Domain 2"/>
    <property type="match status" value="1"/>
</dbReference>
<dbReference type="Gene3D" id="4.10.372.10">
    <property type="entry name" value="Lipoxygenase-1, Domain 3"/>
    <property type="match status" value="1"/>
</dbReference>
<dbReference type="Gene3D" id="1.20.245.10">
    <property type="entry name" value="Lipoxygenase-1, Domain 5"/>
    <property type="match status" value="1"/>
</dbReference>
<dbReference type="Gene3D" id="2.60.60.20">
    <property type="entry name" value="PLAT/LH2 domain"/>
    <property type="match status" value="1"/>
</dbReference>
<dbReference type="InterPro" id="IPR000907">
    <property type="entry name" value="LipOase"/>
</dbReference>
<dbReference type="InterPro" id="IPR013819">
    <property type="entry name" value="LipOase_C"/>
</dbReference>
<dbReference type="InterPro" id="IPR036226">
    <property type="entry name" value="LipOase_C_sf"/>
</dbReference>
<dbReference type="InterPro" id="IPR020834">
    <property type="entry name" value="LipOase_CS"/>
</dbReference>
<dbReference type="InterPro" id="IPR020833">
    <property type="entry name" value="LipOase_Fe_BS"/>
</dbReference>
<dbReference type="InterPro" id="IPR001246">
    <property type="entry name" value="LipOase_plant"/>
</dbReference>
<dbReference type="InterPro" id="IPR042057">
    <property type="entry name" value="Lipoxy_PLAT/LH2"/>
</dbReference>
<dbReference type="InterPro" id="IPR027433">
    <property type="entry name" value="Lipoxygenase_dom_3"/>
</dbReference>
<dbReference type="InterPro" id="IPR001024">
    <property type="entry name" value="PLAT/LH2_dom"/>
</dbReference>
<dbReference type="InterPro" id="IPR036392">
    <property type="entry name" value="PLAT/LH2_dom_sf"/>
</dbReference>
<dbReference type="PANTHER" id="PTHR11771">
    <property type="entry name" value="LIPOXYGENASE"/>
    <property type="match status" value="1"/>
</dbReference>
<dbReference type="Pfam" id="PF00305">
    <property type="entry name" value="Lipoxygenase"/>
    <property type="match status" value="1"/>
</dbReference>
<dbReference type="Pfam" id="PF01477">
    <property type="entry name" value="PLAT"/>
    <property type="match status" value="1"/>
</dbReference>
<dbReference type="PRINTS" id="PR00087">
    <property type="entry name" value="LIPOXYGENASE"/>
</dbReference>
<dbReference type="PRINTS" id="PR00468">
    <property type="entry name" value="PLTLPOXGNASE"/>
</dbReference>
<dbReference type="SMART" id="SM00308">
    <property type="entry name" value="LH2"/>
    <property type="match status" value="1"/>
</dbReference>
<dbReference type="SUPFAM" id="SSF49723">
    <property type="entry name" value="Lipase/lipooxygenase domain (PLAT/LH2 domain)"/>
    <property type="match status" value="1"/>
</dbReference>
<dbReference type="SUPFAM" id="SSF48484">
    <property type="entry name" value="Lipoxigenase"/>
    <property type="match status" value="1"/>
</dbReference>
<dbReference type="PROSITE" id="PS00711">
    <property type="entry name" value="LIPOXYGENASE_1"/>
    <property type="match status" value="1"/>
</dbReference>
<dbReference type="PROSITE" id="PS00081">
    <property type="entry name" value="LIPOXYGENASE_2"/>
    <property type="match status" value="1"/>
</dbReference>
<dbReference type="PROSITE" id="PS51393">
    <property type="entry name" value="LIPOXYGENASE_3"/>
    <property type="match status" value="1"/>
</dbReference>
<dbReference type="PROSITE" id="PS50095">
    <property type="entry name" value="PLAT"/>
    <property type="match status" value="1"/>
</dbReference>
<sequence length="860" mass="96765">MLGQLVGGLIGGHHDSKKVKGTVVMMKKNALDFTDLAGSLTDKIFEALGQKVSFQLISSVQSDPANGLQGKHSNPAYLENFLLTLTPLAAGETAFGVTFDWNEEFGVPGAFVIKNMHINEFFLKSLTLEDVPNHGKVHFVCNSWVYPSFRYKSDRIFFANQPYLPSETPELLRKYRENELVTLRGDGTGKREAWDRIYDYDVYNDLGNPDQGKENVRTTLGGSADYPYPRRGRTGRPPTRTDPKSESRIPLILSLDIYVPRDERFGHLKMSDFLTYALKSIVQFILPELHALFDGTPNEFDSFEDVLRLYEGGIKLPQGPLFKALTDAIPLEMIRELLRTDGEGILRFPTPLVIKDSKTAWRTDEEFAREMLAGVNPVIISRLEEFPPKSKLDPELYGNQNSTITAEHIEGKLDGLTIDEAINSNKLFILNHHDVLIPYLRRINTTTTKTYASRTLLFLQDNGSLKPLAIELSLPHPDGDQFGVTSKVYTPSDQGVEGSIWQLAKAYVAVNDSGVHQLISHWLNTHAVIEPFVIATNRQLSVLHPIHKLLYPHFRDTMNINALARQILINAGGVLESTVFPSKFAMEMSAVVYKDWVFPDQALPADLVKRGVAVEDSSSPHGVRLLIDDYPYAVDGLEIWSAIKSWVTDYCSFYYGSNEEILKDNELQAWWKEVREVGHGDKKNEPWWAEMETPQELIDSCTTIIWIASALHAAVNFGQYPYAGYLPNRPTVSRKFMPEPGTPEYEELKKNPDKAFLKTITAQLQTLLGVSLIEILSRHTTDEIYLGQRESPEWTKDKEPLAAFERFGNKLTDIEKQIMQRNGNNILTNRTGPVNAPYTLLFPTSEGGLTGKGIPNSVSI</sequence>